<protein>
    <recommendedName>
        <fullName evidence="1">Biosynthetic arginine decarboxylase</fullName>
        <shortName evidence="1">ADC</shortName>
        <ecNumber evidence="1">4.1.1.19</ecNumber>
    </recommendedName>
</protein>
<name>SPEA_XANAC</name>
<feature type="chain" id="PRO_0000149987" description="Biosynthetic arginine decarboxylase">
    <location>
        <begin position="1"/>
        <end position="628"/>
    </location>
</feature>
<feature type="binding site" evidence="1">
    <location>
        <begin position="279"/>
        <end position="289"/>
    </location>
    <ligand>
        <name>substrate</name>
    </ligand>
</feature>
<feature type="modified residue" description="N6-(pyridoxal phosphate)lysine" evidence="1">
    <location>
        <position position="99"/>
    </location>
</feature>
<accession>Q8PFQ5</accession>
<gene>
    <name evidence="1" type="primary">speA</name>
    <name type="ordered locus">XAC3923</name>
</gene>
<sequence>MSDWSLDQARKTYSIPHWADGYFDVNAAGHVVVTPTADGPAVSLPEVVDAARAAGAKLPLLVRFPDILGQRLGKLQAAFAQAQSEWDYAGGYTAVYPIKVNQHRGVAGTLASHHGEGFGLEAGSKPELMAVLALSRPGGLIVCNGYKDREYIRLALIGRKLGLQTFIVIEKPSELTLVLEEARALDVKPGLGVRMRLASLGAGKWQNSGGDKAKFGLSPRQVLDLWKTLRDTEYADSLNLLHFHMGSQISNVRDIANGMREATRYFVELSRLGAKISHVDVGGGLGIDYEGTRSRSYCSINYGLHSYASNIVQPLASACEEHGLTPPRIVTECGRAMTAHHAVLIANVSEVEQAPEGRVPDAHDDEPAAIRHLREIHDELDVRPAVELFQEAQHFHAEGLSAYALGQIDLTHRARIDDLFYAIAHGVRARLSFDEKSHRPVLDELNERLVDKYFVNFSVFESIPDVWAIDQVFPIVPIERLNEAPQRRGIIADMTCDSDGMVKTYVENESLDSSLPLHRLNAGESYRIGFFLVGAYQEILGDIHNLFGDTDAVEVVVDRDGYRIAQQRRGDTTDVMLDYVGYQLDTLRATYAERIAAAHLSPERAQELSAALEAGLTGYTYLSDEPLG</sequence>
<comment type="function">
    <text evidence="1">Catalyzes the biosynthesis of agmatine from arginine.</text>
</comment>
<comment type="catalytic activity">
    <reaction evidence="1">
        <text>L-arginine + H(+) = agmatine + CO2</text>
        <dbReference type="Rhea" id="RHEA:17641"/>
        <dbReference type="ChEBI" id="CHEBI:15378"/>
        <dbReference type="ChEBI" id="CHEBI:16526"/>
        <dbReference type="ChEBI" id="CHEBI:32682"/>
        <dbReference type="ChEBI" id="CHEBI:58145"/>
        <dbReference type="EC" id="4.1.1.19"/>
    </reaction>
</comment>
<comment type="cofactor">
    <cofactor evidence="1">
        <name>Mg(2+)</name>
        <dbReference type="ChEBI" id="CHEBI:18420"/>
    </cofactor>
</comment>
<comment type="cofactor">
    <cofactor evidence="1">
        <name>pyridoxal 5'-phosphate</name>
        <dbReference type="ChEBI" id="CHEBI:597326"/>
    </cofactor>
</comment>
<comment type="similarity">
    <text evidence="1">Belongs to the Orn/Lys/Arg decarboxylase class-II family. SpeA subfamily.</text>
</comment>
<comment type="sequence caution" evidence="2">
    <conflict type="erroneous initiation">
        <sequence resource="EMBL-CDS" id="AAM38760"/>
    </conflict>
</comment>
<keyword id="KW-0210">Decarboxylase</keyword>
<keyword id="KW-0456">Lyase</keyword>
<keyword id="KW-0460">Magnesium</keyword>
<keyword id="KW-0479">Metal-binding</keyword>
<keyword id="KW-0620">Polyamine biosynthesis</keyword>
<keyword id="KW-0663">Pyridoxal phosphate</keyword>
<keyword id="KW-0745">Spermidine biosynthesis</keyword>
<proteinExistence type="inferred from homology"/>
<evidence type="ECO:0000255" key="1">
    <source>
        <dbReference type="HAMAP-Rule" id="MF_01417"/>
    </source>
</evidence>
<evidence type="ECO:0000305" key="2"/>
<dbReference type="EC" id="4.1.1.19" evidence="1"/>
<dbReference type="EMBL" id="AE008923">
    <property type="protein sequence ID" value="AAM38760.1"/>
    <property type="status" value="ALT_INIT"/>
    <property type="molecule type" value="Genomic_DNA"/>
</dbReference>
<dbReference type="RefSeq" id="WP_003491107.1">
    <property type="nucleotide sequence ID" value="NC_003919.1"/>
</dbReference>
<dbReference type="SMR" id="Q8PFQ5"/>
<dbReference type="GeneID" id="66912940"/>
<dbReference type="KEGG" id="xac:XAC3923"/>
<dbReference type="eggNOG" id="COG1166">
    <property type="taxonomic scope" value="Bacteria"/>
</dbReference>
<dbReference type="HOGENOM" id="CLU_027243_1_0_6"/>
<dbReference type="Proteomes" id="UP000000576">
    <property type="component" value="Chromosome"/>
</dbReference>
<dbReference type="GO" id="GO:0008792">
    <property type="term" value="F:arginine decarboxylase activity"/>
    <property type="evidence" value="ECO:0007669"/>
    <property type="project" value="UniProtKB-UniRule"/>
</dbReference>
<dbReference type="GO" id="GO:0046872">
    <property type="term" value="F:metal ion binding"/>
    <property type="evidence" value="ECO:0007669"/>
    <property type="project" value="UniProtKB-KW"/>
</dbReference>
<dbReference type="GO" id="GO:0006527">
    <property type="term" value="P:arginine catabolic process"/>
    <property type="evidence" value="ECO:0007669"/>
    <property type="project" value="InterPro"/>
</dbReference>
<dbReference type="GO" id="GO:0033388">
    <property type="term" value="P:putrescine biosynthetic process from arginine"/>
    <property type="evidence" value="ECO:0007669"/>
    <property type="project" value="TreeGrafter"/>
</dbReference>
<dbReference type="GO" id="GO:0008295">
    <property type="term" value="P:spermidine biosynthetic process"/>
    <property type="evidence" value="ECO:0007669"/>
    <property type="project" value="UniProtKB-UniRule"/>
</dbReference>
<dbReference type="CDD" id="cd06830">
    <property type="entry name" value="PLPDE_III_ADC"/>
    <property type="match status" value="1"/>
</dbReference>
<dbReference type="FunFam" id="1.20.58.930:FF:000004">
    <property type="entry name" value="Biosynthetic arginine decarboxylase"/>
    <property type="match status" value="1"/>
</dbReference>
<dbReference type="FunFam" id="3.20.20.10:FF:000001">
    <property type="entry name" value="Biosynthetic arginine decarboxylase"/>
    <property type="match status" value="1"/>
</dbReference>
<dbReference type="Gene3D" id="1.10.287.3440">
    <property type="match status" value="1"/>
</dbReference>
<dbReference type="Gene3D" id="1.20.58.930">
    <property type="match status" value="1"/>
</dbReference>
<dbReference type="Gene3D" id="3.20.20.10">
    <property type="entry name" value="Alanine racemase"/>
    <property type="match status" value="1"/>
</dbReference>
<dbReference type="Gene3D" id="2.40.37.10">
    <property type="entry name" value="Lyase, Ornithine Decarboxylase, Chain A, domain 1"/>
    <property type="match status" value="1"/>
</dbReference>
<dbReference type="HAMAP" id="MF_01417">
    <property type="entry name" value="SpeA"/>
    <property type="match status" value="1"/>
</dbReference>
<dbReference type="InterPro" id="IPR009006">
    <property type="entry name" value="Ala_racemase/Decarboxylase_C"/>
</dbReference>
<dbReference type="InterPro" id="IPR040634">
    <property type="entry name" value="Arg_decarb_HB"/>
</dbReference>
<dbReference type="InterPro" id="IPR041128">
    <property type="entry name" value="Arg_decarbox_C"/>
</dbReference>
<dbReference type="InterPro" id="IPR002985">
    <property type="entry name" value="Arg_decrbxlase"/>
</dbReference>
<dbReference type="InterPro" id="IPR022657">
    <property type="entry name" value="De-COase2_CS"/>
</dbReference>
<dbReference type="InterPro" id="IPR022644">
    <property type="entry name" value="De-COase2_N"/>
</dbReference>
<dbReference type="InterPro" id="IPR000183">
    <property type="entry name" value="Orn/DAP/Arg_de-COase"/>
</dbReference>
<dbReference type="InterPro" id="IPR029066">
    <property type="entry name" value="PLP-binding_barrel"/>
</dbReference>
<dbReference type="NCBIfam" id="NF003763">
    <property type="entry name" value="PRK05354.1"/>
    <property type="match status" value="1"/>
</dbReference>
<dbReference type="NCBIfam" id="TIGR01273">
    <property type="entry name" value="speA"/>
    <property type="match status" value="1"/>
</dbReference>
<dbReference type="PANTHER" id="PTHR43295">
    <property type="entry name" value="ARGININE DECARBOXYLASE"/>
    <property type="match status" value="1"/>
</dbReference>
<dbReference type="PANTHER" id="PTHR43295:SF9">
    <property type="entry name" value="BIOSYNTHETIC ARGININE DECARBOXYLASE"/>
    <property type="match status" value="1"/>
</dbReference>
<dbReference type="Pfam" id="PF17810">
    <property type="entry name" value="Arg_decarb_HB"/>
    <property type="match status" value="1"/>
</dbReference>
<dbReference type="Pfam" id="PF17944">
    <property type="entry name" value="Arg_decarbox_C"/>
    <property type="match status" value="1"/>
</dbReference>
<dbReference type="Pfam" id="PF02784">
    <property type="entry name" value="Orn_Arg_deC_N"/>
    <property type="match status" value="1"/>
</dbReference>
<dbReference type="PIRSF" id="PIRSF001336">
    <property type="entry name" value="Arg_decrbxlase"/>
    <property type="match status" value="1"/>
</dbReference>
<dbReference type="PRINTS" id="PR01180">
    <property type="entry name" value="ARGDCRBXLASE"/>
</dbReference>
<dbReference type="PRINTS" id="PR01179">
    <property type="entry name" value="ODADCRBXLASE"/>
</dbReference>
<dbReference type="SUPFAM" id="SSF50621">
    <property type="entry name" value="Alanine racemase C-terminal domain-like"/>
    <property type="match status" value="1"/>
</dbReference>
<dbReference type="SUPFAM" id="SSF51419">
    <property type="entry name" value="PLP-binding barrel"/>
    <property type="match status" value="1"/>
</dbReference>
<dbReference type="PROSITE" id="PS00879">
    <property type="entry name" value="ODR_DC_2_2"/>
    <property type="match status" value="1"/>
</dbReference>
<reference key="1">
    <citation type="journal article" date="2002" name="Nature">
        <title>Comparison of the genomes of two Xanthomonas pathogens with differing host specificities.</title>
        <authorList>
            <person name="da Silva A.C.R."/>
            <person name="Ferro J.A."/>
            <person name="Reinach F.C."/>
            <person name="Farah C.S."/>
            <person name="Furlan L.R."/>
            <person name="Quaggio R.B."/>
            <person name="Monteiro-Vitorello C.B."/>
            <person name="Van Sluys M.A."/>
            <person name="Almeida N.F. Jr."/>
            <person name="Alves L.M.C."/>
            <person name="do Amaral A.M."/>
            <person name="Bertolini M.C."/>
            <person name="Camargo L.E.A."/>
            <person name="Camarotte G."/>
            <person name="Cannavan F."/>
            <person name="Cardozo J."/>
            <person name="Chambergo F."/>
            <person name="Ciapina L.P."/>
            <person name="Cicarelli R.M.B."/>
            <person name="Coutinho L.L."/>
            <person name="Cursino-Santos J.R."/>
            <person name="El-Dorry H."/>
            <person name="Faria J.B."/>
            <person name="Ferreira A.J.S."/>
            <person name="Ferreira R.C.C."/>
            <person name="Ferro M.I.T."/>
            <person name="Formighieri E.F."/>
            <person name="Franco M.C."/>
            <person name="Greggio C.C."/>
            <person name="Gruber A."/>
            <person name="Katsuyama A.M."/>
            <person name="Kishi L.T."/>
            <person name="Leite R.P."/>
            <person name="Lemos E.G.M."/>
            <person name="Lemos M.V.F."/>
            <person name="Locali E.C."/>
            <person name="Machado M.A."/>
            <person name="Madeira A.M.B.N."/>
            <person name="Martinez-Rossi N.M."/>
            <person name="Martins E.C."/>
            <person name="Meidanis J."/>
            <person name="Menck C.F.M."/>
            <person name="Miyaki C.Y."/>
            <person name="Moon D.H."/>
            <person name="Moreira L.M."/>
            <person name="Novo M.T.M."/>
            <person name="Okura V.K."/>
            <person name="Oliveira M.C."/>
            <person name="Oliveira V.R."/>
            <person name="Pereira H.A."/>
            <person name="Rossi A."/>
            <person name="Sena J.A.D."/>
            <person name="Silva C."/>
            <person name="de Souza R.F."/>
            <person name="Spinola L.A.F."/>
            <person name="Takita M.A."/>
            <person name="Tamura R.E."/>
            <person name="Teixeira E.C."/>
            <person name="Tezza R.I.D."/>
            <person name="Trindade dos Santos M."/>
            <person name="Truffi D."/>
            <person name="Tsai S.M."/>
            <person name="White F.F."/>
            <person name="Setubal J.C."/>
            <person name="Kitajima J.P."/>
        </authorList>
    </citation>
    <scope>NUCLEOTIDE SEQUENCE [LARGE SCALE GENOMIC DNA]</scope>
    <source>
        <strain>306</strain>
    </source>
</reference>
<organism>
    <name type="scientific">Xanthomonas axonopodis pv. citri (strain 306)</name>
    <dbReference type="NCBI Taxonomy" id="190486"/>
    <lineage>
        <taxon>Bacteria</taxon>
        <taxon>Pseudomonadati</taxon>
        <taxon>Pseudomonadota</taxon>
        <taxon>Gammaproteobacteria</taxon>
        <taxon>Lysobacterales</taxon>
        <taxon>Lysobacteraceae</taxon>
        <taxon>Xanthomonas</taxon>
    </lineage>
</organism>